<sequence length="341" mass="38099">MRYLITGTAGFIGFHVAKRLIDEGHFVVGFDGMTPYYDVTLKERRHAILQRSNGFKAVTAMLEDRAALDRAAELAEPEVIIHLAAQAGVRYSLENPKAYVDANLVGSWNMLELAKAIAPKHLMLASTSSIYGANEKIPFAEADRADEPMTLYAATKKSMELMAHSYAHLYKVPTTSFRFFTVYGPWGRPDMALFKFVDAIHNGRPIDIYGEGRMSRDFTYIDDLVESIVRLSHVPPSEENRVAPEKATDTLSRHAPFRVVNTGGGQPVELMTFVETVEKAVGRPAIHNMLPMQQGDVPRTFASPDLLEALTGFKPSVSVEEGVARFVEWYDQNYRRAHTTV</sequence>
<accession>O54067</accession>
<organism>
    <name type="scientific">Rhizobium meliloti (strain 1021)</name>
    <name type="common">Ensifer meliloti</name>
    <name type="synonym">Sinorhizobium meliloti</name>
    <dbReference type="NCBI Taxonomy" id="266834"/>
    <lineage>
        <taxon>Bacteria</taxon>
        <taxon>Pseudomonadati</taxon>
        <taxon>Pseudomonadota</taxon>
        <taxon>Alphaproteobacteria</taxon>
        <taxon>Hyphomicrobiales</taxon>
        <taxon>Rhizobiaceae</taxon>
        <taxon>Sinorhizobium/Ensifer group</taxon>
        <taxon>Sinorhizobium</taxon>
    </lineage>
</organism>
<name>LPSL_RHIME</name>
<protein>
    <recommendedName>
        <fullName evidence="4">Probable UDP-glucuronate 4-epimerase</fullName>
        <ecNumber evidence="5">5.1.3.6</ecNumber>
    </recommendedName>
    <alternativeName>
        <fullName evidence="3">UDP-glucuronic acid epimerase</fullName>
    </alternativeName>
</protein>
<keyword id="KW-0413">Isomerase</keyword>
<keyword id="KW-0520">NAD</keyword>
<keyword id="KW-1185">Reference proteome</keyword>
<dbReference type="EC" id="5.1.3.6" evidence="5"/>
<dbReference type="EMBL" id="AJ222661">
    <property type="protein sequence ID" value="CAA10917.1"/>
    <property type="molecule type" value="Genomic_DNA"/>
</dbReference>
<dbReference type="EMBL" id="AL591688">
    <property type="protein sequence ID" value="CAC45662.1"/>
    <property type="molecule type" value="Genomic_DNA"/>
</dbReference>
<dbReference type="PIR" id="T46572">
    <property type="entry name" value="T46572"/>
</dbReference>
<dbReference type="RefSeq" id="NP_385189.1">
    <property type="nucleotide sequence ID" value="NC_003047.1"/>
</dbReference>
<dbReference type="RefSeq" id="WP_010969032.1">
    <property type="nucleotide sequence ID" value="NC_003047.1"/>
</dbReference>
<dbReference type="SMR" id="O54067"/>
<dbReference type="EnsemblBacteria" id="CAC45662">
    <property type="protein sequence ID" value="CAC45662"/>
    <property type="gene ID" value="SMc02640"/>
</dbReference>
<dbReference type="KEGG" id="sme:SMc02640"/>
<dbReference type="PATRIC" id="fig|266834.11.peg.2491"/>
<dbReference type="eggNOG" id="COG0451">
    <property type="taxonomic scope" value="Bacteria"/>
</dbReference>
<dbReference type="HOGENOM" id="CLU_007383_1_7_5"/>
<dbReference type="OrthoDB" id="9801785at2"/>
<dbReference type="Proteomes" id="UP000001976">
    <property type="component" value="Chromosome"/>
</dbReference>
<dbReference type="GO" id="GO:0050378">
    <property type="term" value="F:UDP-glucuronate 4-epimerase activity"/>
    <property type="evidence" value="ECO:0007669"/>
    <property type="project" value="UniProtKB-EC"/>
</dbReference>
<dbReference type="CDD" id="cd05253">
    <property type="entry name" value="UDP_GE_SDE_e"/>
    <property type="match status" value="1"/>
</dbReference>
<dbReference type="Gene3D" id="3.40.50.720">
    <property type="entry name" value="NAD(P)-binding Rossmann-like Domain"/>
    <property type="match status" value="1"/>
</dbReference>
<dbReference type="InterPro" id="IPR001509">
    <property type="entry name" value="Epimerase_deHydtase"/>
</dbReference>
<dbReference type="InterPro" id="IPR036291">
    <property type="entry name" value="NAD(P)-bd_dom_sf"/>
</dbReference>
<dbReference type="PANTHER" id="PTHR43574">
    <property type="entry name" value="EPIMERASE-RELATED"/>
    <property type="match status" value="1"/>
</dbReference>
<dbReference type="Pfam" id="PF01370">
    <property type="entry name" value="Epimerase"/>
    <property type="match status" value="1"/>
</dbReference>
<dbReference type="PRINTS" id="PR01713">
    <property type="entry name" value="NUCEPIMERASE"/>
</dbReference>
<dbReference type="SUPFAM" id="SSF51735">
    <property type="entry name" value="NAD(P)-binding Rossmann-fold domains"/>
    <property type="match status" value="1"/>
</dbReference>
<feature type="chain" id="PRO_0000183257" description="Probable UDP-glucuronate 4-epimerase">
    <location>
        <begin position="1"/>
        <end position="341"/>
    </location>
</feature>
<feature type="active site" description="Proton acceptor" evidence="1">
    <location>
        <position position="152"/>
    </location>
</feature>
<feature type="sequence conflict" description="In Ref. 1; CAA10917." evidence="4" ref="1">
    <original>S</original>
    <variation>A</variation>
    <location>
        <position position="176"/>
    </location>
</feature>
<proteinExistence type="inferred from homology"/>
<evidence type="ECO:0000250" key="1">
    <source>
        <dbReference type="UniProtKB" id="P09147"/>
    </source>
</evidence>
<evidence type="ECO:0000269" key="2">
    <source>
    </source>
</evidence>
<evidence type="ECO:0000303" key="3">
    <source>
    </source>
</evidence>
<evidence type="ECO:0000305" key="4"/>
<evidence type="ECO:0000305" key="5">
    <source>
    </source>
</evidence>
<gene>
    <name evidence="3" type="primary">lspL</name>
    <name type="ordered locus">R01083</name>
    <name type="ORF">SMc02640</name>
</gene>
<reference key="1">
    <citation type="journal article" date="1998" name="J. Bacteriol.">
        <title>Novel rkp gene clusters of Sinorhizobium meliloti involved in capsular polysaccharide production and invasion of the symbiotic nodule: the rkpK gene encodes a UDP-glucose dehydrogenase.</title>
        <authorList>
            <person name="Kereszt A."/>
            <person name="Kiss E."/>
            <person name="Reuhs B.L."/>
            <person name="Carlson R.W."/>
            <person name="Kondorosi A."/>
            <person name="Putnoky P."/>
        </authorList>
    </citation>
    <scope>NUCLEOTIDE SEQUENCE [GENOMIC DNA]</scope>
    <scope>DISRUPTION PHENOTYPE</scope>
    <source>
        <strain>41</strain>
    </source>
</reference>
<reference key="2">
    <citation type="journal article" date="2001" name="Proc. Natl. Acad. Sci. U.S.A.">
        <title>Analysis of the chromosome sequence of the legume symbiont Sinorhizobium meliloti strain 1021.</title>
        <authorList>
            <person name="Capela D."/>
            <person name="Barloy-Hubler F."/>
            <person name="Gouzy J."/>
            <person name="Bothe G."/>
            <person name="Ampe F."/>
            <person name="Batut J."/>
            <person name="Boistard P."/>
            <person name="Becker A."/>
            <person name="Boutry M."/>
            <person name="Cadieu E."/>
            <person name="Dreano S."/>
            <person name="Gloux S."/>
            <person name="Godrie T."/>
            <person name="Goffeau A."/>
            <person name="Kahn D."/>
            <person name="Kiss E."/>
            <person name="Lelaure V."/>
            <person name="Masuy D."/>
            <person name="Pohl T."/>
            <person name="Portetelle D."/>
            <person name="Puehler A."/>
            <person name="Purnelle B."/>
            <person name="Ramsperger U."/>
            <person name="Renard C."/>
            <person name="Thebault P."/>
            <person name="Vandenbol M."/>
            <person name="Weidner S."/>
            <person name="Galibert F."/>
        </authorList>
    </citation>
    <scope>NUCLEOTIDE SEQUENCE [LARGE SCALE GENOMIC DNA]</scope>
    <source>
        <strain>1021</strain>
    </source>
</reference>
<reference key="3">
    <citation type="journal article" date="2001" name="Science">
        <title>The composite genome of the legume symbiont Sinorhizobium meliloti.</title>
        <authorList>
            <person name="Galibert F."/>
            <person name="Finan T.M."/>
            <person name="Long S.R."/>
            <person name="Puehler A."/>
            <person name="Abola P."/>
            <person name="Ampe F."/>
            <person name="Barloy-Hubler F."/>
            <person name="Barnett M.J."/>
            <person name="Becker A."/>
            <person name="Boistard P."/>
            <person name="Bothe G."/>
            <person name="Boutry M."/>
            <person name="Bowser L."/>
            <person name="Buhrmester J."/>
            <person name="Cadieu E."/>
            <person name="Capela D."/>
            <person name="Chain P."/>
            <person name="Cowie A."/>
            <person name="Davis R.W."/>
            <person name="Dreano S."/>
            <person name="Federspiel N.A."/>
            <person name="Fisher R.F."/>
            <person name="Gloux S."/>
            <person name="Godrie T."/>
            <person name="Goffeau A."/>
            <person name="Golding B."/>
            <person name="Gouzy J."/>
            <person name="Gurjal M."/>
            <person name="Hernandez-Lucas I."/>
            <person name="Hong A."/>
            <person name="Huizar L."/>
            <person name="Hyman R.W."/>
            <person name="Jones T."/>
            <person name="Kahn D."/>
            <person name="Kahn M.L."/>
            <person name="Kalman S."/>
            <person name="Keating D.H."/>
            <person name="Kiss E."/>
            <person name="Komp C."/>
            <person name="Lelaure V."/>
            <person name="Masuy D."/>
            <person name="Palm C."/>
            <person name="Peck M.C."/>
            <person name="Pohl T.M."/>
            <person name="Portetelle D."/>
            <person name="Purnelle B."/>
            <person name="Ramsperger U."/>
            <person name="Surzycki R."/>
            <person name="Thebault P."/>
            <person name="Vandenbol M."/>
            <person name="Vorhoelter F.J."/>
            <person name="Weidner S."/>
            <person name="Wells D.H."/>
            <person name="Wong K."/>
            <person name="Yeh K.-C."/>
            <person name="Batut J."/>
        </authorList>
    </citation>
    <scope>NUCLEOTIDE SEQUENCE [LARGE SCALE GENOMIC DNA]</scope>
    <source>
        <strain>1021</strain>
    </source>
</reference>
<comment type="catalytic activity">
    <reaction evidence="5">
        <text>UDP-alpha-D-glucuronate = UDP-alpha-D-galacturonate</text>
        <dbReference type="Rhea" id="RHEA:11404"/>
        <dbReference type="ChEBI" id="CHEBI:57635"/>
        <dbReference type="ChEBI" id="CHEBI:58052"/>
        <dbReference type="EC" id="5.1.3.6"/>
    </reaction>
</comment>
<comment type="cofactor">
    <cofactor evidence="1">
        <name>NAD(+)</name>
        <dbReference type="ChEBI" id="CHEBI:57540"/>
    </cofactor>
</comment>
<comment type="disruption phenotype">
    <text evidence="2">Mutation affects lipopolysaccharide (LPS) production.</text>
</comment>
<comment type="similarity">
    <text evidence="4">Belongs to the NAD(P)-dependent epimerase/dehydratase family.</text>
</comment>